<organism>
    <name type="scientific">Caenorhabditis elegans</name>
    <dbReference type="NCBI Taxonomy" id="6239"/>
    <lineage>
        <taxon>Eukaryota</taxon>
        <taxon>Metazoa</taxon>
        <taxon>Ecdysozoa</taxon>
        <taxon>Nematoda</taxon>
        <taxon>Chromadorea</taxon>
        <taxon>Rhabditida</taxon>
        <taxon>Rhabditina</taxon>
        <taxon>Rhabditomorpha</taxon>
        <taxon>Rhabditoidea</taxon>
        <taxon>Rhabditidae</taxon>
        <taxon>Peloderinae</taxon>
        <taxon>Caenorhabditis</taxon>
    </lineage>
</organism>
<accession>Q19425</accession>
<reference key="1">
    <citation type="journal article" date="1998" name="Science">
        <title>Genome sequence of the nematode C. elegans: a platform for investigating biology.</title>
        <authorList>
            <consortium name="The C. elegans sequencing consortium"/>
        </authorList>
    </citation>
    <scope>NUCLEOTIDE SEQUENCE [LARGE SCALE GENOMIC DNA]</scope>
    <source>
        <strain>Bristol N2</strain>
    </source>
</reference>
<reference key="2">
    <citation type="journal article" date="2015" name="Science">
        <title>Metabolism. Lysosomal amino acid transporter SLC38A9 signals arginine sufficiency to mTORC1.</title>
        <authorList>
            <person name="Wang S."/>
            <person name="Tsun Z.Y."/>
            <person name="Wolfson R.L."/>
            <person name="Shen K."/>
            <person name="Wyant G.A."/>
            <person name="Plovanich M.E."/>
            <person name="Yuan E.D."/>
            <person name="Jones T.D."/>
            <person name="Chantranupong L."/>
            <person name="Comb W."/>
            <person name="Wang T."/>
            <person name="Bar-Peled L."/>
            <person name="Zoncu R."/>
            <person name="Straub C."/>
            <person name="Kim C."/>
            <person name="Park J."/>
            <person name="Sabatini B.L."/>
            <person name="Sabatini D.M."/>
        </authorList>
    </citation>
    <scope>IDENTIFICATION</scope>
</reference>
<gene>
    <name type="ORF">F13H10.3</name>
</gene>
<evidence type="ECO:0000250" key="1">
    <source>
        <dbReference type="UniProtKB" id="Q08BA4"/>
    </source>
</evidence>
<evidence type="ECO:0000250" key="2">
    <source>
        <dbReference type="UniProtKB" id="Q8NBW4"/>
    </source>
</evidence>
<evidence type="ECO:0000255" key="3"/>
<evidence type="ECO:0000255" key="4">
    <source>
        <dbReference type="PROSITE-ProRule" id="PRU00498"/>
    </source>
</evidence>
<evidence type="ECO:0000256" key="5">
    <source>
        <dbReference type="SAM" id="MobiDB-lite"/>
    </source>
</evidence>
<evidence type="ECO:0000305" key="6"/>
<dbReference type="EMBL" id="Z68748">
    <property type="protein sequence ID" value="CAA92953.2"/>
    <property type="molecule type" value="Genomic_DNA"/>
</dbReference>
<dbReference type="PIR" id="T20863">
    <property type="entry name" value="T20863"/>
</dbReference>
<dbReference type="RefSeq" id="NP_741486.1">
    <property type="nucleotide sequence ID" value="NM_171417.8"/>
</dbReference>
<dbReference type="SMR" id="Q19425"/>
<dbReference type="FunCoup" id="Q19425">
    <property type="interactions" value="2141"/>
</dbReference>
<dbReference type="STRING" id="6239.F13H10.3b.1"/>
<dbReference type="PaxDb" id="6239-F13H10.3b"/>
<dbReference type="EnsemblMetazoa" id="F13H10.3a.1">
    <property type="protein sequence ID" value="F13H10.3a.1"/>
    <property type="gene ID" value="WBGene00008774"/>
</dbReference>
<dbReference type="GeneID" id="177997"/>
<dbReference type="KEGG" id="cel:CELE_F13H10.3"/>
<dbReference type="UCSC" id="F13H10.3a">
    <property type="organism name" value="c. elegans"/>
</dbReference>
<dbReference type="AGR" id="WB:WBGene00008774"/>
<dbReference type="CTD" id="177997"/>
<dbReference type="WormBase" id="F13H10.3a">
    <property type="protein sequence ID" value="CE27959"/>
    <property type="gene ID" value="WBGene00008774"/>
</dbReference>
<dbReference type="eggNOG" id="KOG1305">
    <property type="taxonomic scope" value="Eukaryota"/>
</dbReference>
<dbReference type="InParanoid" id="Q19425"/>
<dbReference type="OrthoDB" id="294730at2759"/>
<dbReference type="Reactome" id="R-CEL-1632852">
    <property type="pathway name" value="Macroautophagy"/>
</dbReference>
<dbReference type="Reactome" id="R-CEL-165159">
    <property type="pathway name" value="MTOR signalling"/>
</dbReference>
<dbReference type="Reactome" id="R-CEL-166208">
    <property type="pathway name" value="mTORC1-mediated signalling"/>
</dbReference>
<dbReference type="Reactome" id="R-CEL-380972">
    <property type="pathway name" value="Energy dependent regulation of mTOR by LKB1-AMPK"/>
</dbReference>
<dbReference type="Reactome" id="R-CEL-5628897">
    <property type="pathway name" value="TP53 Regulates Metabolic Genes"/>
</dbReference>
<dbReference type="Reactome" id="R-CEL-8943724">
    <property type="pathway name" value="Regulation of PTEN gene transcription"/>
</dbReference>
<dbReference type="Reactome" id="R-CEL-9639288">
    <property type="pathway name" value="Amino acids regulate mTORC1"/>
</dbReference>
<dbReference type="PRO" id="PR:Q19425"/>
<dbReference type="Proteomes" id="UP000001940">
    <property type="component" value="Chromosome IV"/>
</dbReference>
<dbReference type="Bgee" id="WBGene00008774">
    <property type="expression patterns" value="Expressed in germ line (C elegans) and 4 other cell types or tissues"/>
</dbReference>
<dbReference type="ExpressionAtlas" id="Q19425">
    <property type="expression patterns" value="baseline and differential"/>
</dbReference>
<dbReference type="GO" id="GO:0031902">
    <property type="term" value="C:late endosome membrane"/>
    <property type="evidence" value="ECO:0007669"/>
    <property type="project" value="UniProtKB-SubCell"/>
</dbReference>
<dbReference type="GO" id="GO:0005765">
    <property type="term" value="C:lysosomal membrane"/>
    <property type="evidence" value="ECO:0000318"/>
    <property type="project" value="GO_Central"/>
</dbReference>
<dbReference type="GO" id="GO:0015179">
    <property type="term" value="F:L-amino acid transmembrane transporter activity"/>
    <property type="evidence" value="ECO:0000318"/>
    <property type="project" value="GO_Central"/>
</dbReference>
<dbReference type="GO" id="GO:0046872">
    <property type="term" value="F:metal ion binding"/>
    <property type="evidence" value="ECO:0007669"/>
    <property type="project" value="UniProtKB-KW"/>
</dbReference>
<dbReference type="GO" id="GO:0003333">
    <property type="term" value="P:amino acid transmembrane transport"/>
    <property type="evidence" value="ECO:0000318"/>
    <property type="project" value="GO_Central"/>
</dbReference>
<dbReference type="InterPro" id="IPR013057">
    <property type="entry name" value="AA_transpt_TM"/>
</dbReference>
<dbReference type="PANTHER" id="PTHR22950">
    <property type="entry name" value="AMINO ACID TRANSPORTER"/>
    <property type="match status" value="1"/>
</dbReference>
<dbReference type="PANTHER" id="PTHR22950:SF244">
    <property type="entry name" value="NEUTRAL AMINO ACID TRANSPORTER 9"/>
    <property type="match status" value="1"/>
</dbReference>
<dbReference type="Pfam" id="PF01490">
    <property type="entry name" value="Aa_trans"/>
    <property type="match status" value="2"/>
</dbReference>
<keyword id="KW-0029">Amino-acid transport</keyword>
<keyword id="KW-1015">Disulfide bond</keyword>
<keyword id="KW-0967">Endosome</keyword>
<keyword id="KW-0325">Glycoprotein</keyword>
<keyword id="KW-0458">Lysosome</keyword>
<keyword id="KW-0472">Membrane</keyword>
<keyword id="KW-0479">Metal-binding</keyword>
<keyword id="KW-1185">Reference proteome</keyword>
<keyword id="KW-0915">Sodium</keyword>
<keyword id="KW-0812">Transmembrane</keyword>
<keyword id="KW-1133">Transmembrane helix</keyword>
<keyword id="KW-0813">Transport</keyword>
<sequence length="615" mass="68693">MPPFFAEFTESVFRHFRRNEPDEENSAICSEKMSSYGAIGVDDNDTDPLLDDEPPRRLPPAGGVPIGRRRAISASQIGSIPSQSAATRQPYLFTGGLGLRDESLLSLHSEDDLHREHNNALRYRLYNRLDPGGEHLTMPDHVLPPNLFSILPFEELKDVSGKQGSIVTIFSIWNTMMGTSLLAMPWALQQAGLVLGIIIMLSMAAICFYTAYIVIESPKRLQDLSVDPLLAEFSDVCKSLFGRIGEYCAVVFSVCVLIGGVIVYWVLMSNFLYYTGAVVYESMQPNSTTIPVMENKTFTCDVYCPEQTSQWTIPQWEKQLYDAVSEMEGGETGDDSWSFDKFWTLRGTVPIYLAFALFPLMNFKSPTFFTKFNVLGTISVMYLLMFVFSKLLECGVNMDFSNPKSIHYVQLANMHFPALSGTLTLSYFIHNAVLTILRNQKHPENNARDLSIGYCLVAFCYVFIGFTFFAAFPVQRSCISDNFLNNFGAGDVLSSTARLFLLFQMITVLPLLMFLVRSQLFYAIFGQTWPGAIRVIILNVLLIAVAVGFATFYPNVGSILRYVGSISGLVYVFALPAMVYIKQSEAAGTLTPMKKYAHYGIIVIGVANLIAQFVI</sequence>
<feature type="chain" id="PRO_0000093832" description="Sodium-coupled neutral amino acid transporter 9 homolog">
    <location>
        <begin position="1"/>
        <end position="615"/>
    </location>
</feature>
<feature type="topological domain" description="Cytoplasmic" evidence="6">
    <location>
        <begin position="1"/>
        <end position="165"/>
    </location>
</feature>
<feature type="transmembrane region" description="Helical; Name=1" evidence="1">
    <location>
        <begin position="166"/>
        <end position="186"/>
    </location>
</feature>
<feature type="topological domain" description="Lumenal" evidence="6">
    <location>
        <begin position="187"/>
        <end position="192"/>
    </location>
</feature>
<feature type="transmembrane region" description="Helical; Name=2" evidence="1">
    <location>
        <begin position="193"/>
        <end position="213"/>
    </location>
</feature>
<feature type="topological domain" description="Cytoplasmic" evidence="6">
    <location>
        <begin position="214"/>
        <end position="246"/>
    </location>
</feature>
<feature type="transmembrane region" description="Helical; Name=3" evidence="1">
    <location>
        <begin position="247"/>
        <end position="273"/>
    </location>
</feature>
<feature type="topological domain" description="Lumenal" evidence="6">
    <location>
        <begin position="274"/>
        <end position="341"/>
    </location>
</feature>
<feature type="transmembrane region" description="Helical; Name=4" evidence="1">
    <location>
        <begin position="342"/>
        <end position="358"/>
    </location>
</feature>
<feature type="topological domain" description="Cytoplasmic" evidence="6">
    <location>
        <begin position="359"/>
        <end position="367"/>
    </location>
</feature>
<feature type="transmembrane region" description="Helical; Name=5" evidence="1">
    <location>
        <begin position="368"/>
        <end position="392"/>
    </location>
</feature>
<feature type="topological domain" description="Lumenal" evidence="6">
    <location>
        <begin position="393"/>
        <end position="413"/>
    </location>
</feature>
<feature type="transmembrane region" description="Helical; Name=6" evidence="1">
    <location>
        <begin position="414"/>
        <end position="434"/>
    </location>
</feature>
<feature type="topological domain" description="Cytoplasmic" evidence="6">
    <location>
        <begin position="435"/>
        <end position="451"/>
    </location>
</feature>
<feature type="transmembrane region" description="Helical; Name=7" evidence="1">
    <location>
        <begin position="452"/>
        <end position="472"/>
    </location>
</feature>
<feature type="topological domain" description="Lumenal" evidence="6">
    <location>
        <begin position="473"/>
        <end position="491"/>
    </location>
</feature>
<feature type="transmembrane region" description="Helical; Name=8" evidence="1">
    <location>
        <begin position="492"/>
        <end position="512"/>
    </location>
</feature>
<feature type="topological domain" description="Cytoplasmic" evidence="6">
    <location>
        <begin position="513"/>
        <end position="533"/>
    </location>
</feature>
<feature type="transmembrane region" description="Helical; Name=9" evidence="1">
    <location>
        <begin position="534"/>
        <end position="554"/>
    </location>
</feature>
<feature type="topological domain" description="Lumenal" evidence="6">
    <location>
        <begin position="555"/>
        <end position="561"/>
    </location>
</feature>
<feature type="transmembrane region" description="Helical; Name=10" evidence="1">
    <location>
        <begin position="562"/>
        <end position="582"/>
    </location>
</feature>
<feature type="topological domain" description="Cytoplasmic" evidence="6">
    <location>
        <begin position="583"/>
        <end position="594"/>
    </location>
</feature>
<feature type="transmembrane region" description="Helical; Name=11" evidence="1">
    <location>
        <begin position="595"/>
        <end position="615"/>
    </location>
</feature>
<feature type="region of interest" description="Disordered" evidence="5">
    <location>
        <begin position="41"/>
        <end position="65"/>
    </location>
</feature>
<feature type="region of interest" description="Important for arginine binding and amino acid transport" evidence="1">
    <location>
        <begin position="175"/>
        <end position="180"/>
    </location>
</feature>
<feature type="compositionally biased region" description="Acidic residues" evidence="5">
    <location>
        <begin position="42"/>
        <end position="52"/>
    </location>
</feature>
<feature type="glycosylation site" description="N-linked (GlcNAc...) asparagine" evidence="4">
    <location>
        <position position="286"/>
    </location>
</feature>
<feature type="glycosylation site" description="N-linked (GlcNAc...) asparagine" evidence="4">
    <location>
        <position position="295"/>
    </location>
</feature>
<feature type="disulfide bond" evidence="1">
    <location>
        <begin position="304"/>
        <end position="478"/>
    </location>
</feature>
<protein>
    <recommendedName>
        <fullName>Sodium-coupled neutral amino acid transporter 9 homolog</fullName>
    </recommendedName>
</protein>
<name>S38A9_CAEEL</name>
<proteinExistence type="inferred from homology"/>
<comment type="function">
    <text evidence="2">Lysosomal amino acid transporter involved in the activation of mTORC1 in response to amino acid levels. Probably acts as an amino acid sensor of the Rag GTPases and Ragulator complexes, 2 complexes involved in amino acid sensing and activation of mTORC1, a signaling complex promoting cell growth in response to growth factors, energy levels, and amino acids.</text>
</comment>
<comment type="activity regulation">
    <text evidence="1 2">Amino acid transport is sodium-dependent (By similarity). Transport of leucine, tyrosine and phenylalanine is increased by arginine binding (By similarity).</text>
</comment>
<comment type="subcellular location">
    <subcellularLocation>
        <location evidence="2">Lysosome membrane</location>
        <topology evidence="3">Multi-pass membrane protein</topology>
    </subcellularLocation>
    <subcellularLocation>
        <location evidence="2">Late endosome membrane</location>
        <topology evidence="3">Multi-pass membrane protein</topology>
    </subcellularLocation>
</comment>
<comment type="similarity">
    <text evidence="6">Belongs to the amino acid/polyamine transporter 2 family. SLC38A9 subfamily.</text>
</comment>